<dbReference type="EMBL" id="AL646053">
    <property type="protein sequence ID" value="CAD18813.1"/>
    <property type="molecule type" value="Genomic_DNA"/>
</dbReference>
<dbReference type="SMR" id="Q8XPH8"/>
<dbReference type="STRING" id="267608.RSp1662"/>
<dbReference type="EnsemblBacteria" id="CAD18813">
    <property type="protein sequence ID" value="CAD18813"/>
    <property type="gene ID" value="RSp1662"/>
</dbReference>
<dbReference type="KEGG" id="rso:RSp1662"/>
<dbReference type="eggNOG" id="COG4108">
    <property type="taxonomic scope" value="Bacteria"/>
</dbReference>
<dbReference type="HOGENOM" id="CLU_002794_2_1_4"/>
<dbReference type="Proteomes" id="UP000001436">
    <property type="component" value="Plasmid megaplasmid Rsp"/>
</dbReference>
<dbReference type="GO" id="GO:0005829">
    <property type="term" value="C:cytosol"/>
    <property type="evidence" value="ECO:0007669"/>
    <property type="project" value="TreeGrafter"/>
</dbReference>
<dbReference type="GO" id="GO:0005525">
    <property type="term" value="F:GTP binding"/>
    <property type="evidence" value="ECO:0007669"/>
    <property type="project" value="UniProtKB-UniRule"/>
</dbReference>
<dbReference type="GO" id="GO:0003924">
    <property type="term" value="F:GTPase activity"/>
    <property type="evidence" value="ECO:0007669"/>
    <property type="project" value="InterPro"/>
</dbReference>
<dbReference type="GO" id="GO:0016150">
    <property type="term" value="F:translation release factor activity, codon nonspecific"/>
    <property type="evidence" value="ECO:0007669"/>
    <property type="project" value="TreeGrafter"/>
</dbReference>
<dbReference type="GO" id="GO:0016149">
    <property type="term" value="F:translation release factor activity, codon specific"/>
    <property type="evidence" value="ECO:0007669"/>
    <property type="project" value="UniProtKB-UniRule"/>
</dbReference>
<dbReference type="GO" id="GO:0006449">
    <property type="term" value="P:regulation of translational termination"/>
    <property type="evidence" value="ECO:0007669"/>
    <property type="project" value="UniProtKB-UniRule"/>
</dbReference>
<dbReference type="CDD" id="cd04169">
    <property type="entry name" value="RF3"/>
    <property type="match status" value="1"/>
</dbReference>
<dbReference type="CDD" id="cd03689">
    <property type="entry name" value="RF3_II"/>
    <property type="match status" value="1"/>
</dbReference>
<dbReference type="CDD" id="cd16259">
    <property type="entry name" value="RF3_III"/>
    <property type="match status" value="1"/>
</dbReference>
<dbReference type="FunFam" id="2.40.30.10:FF:000040">
    <property type="entry name" value="Peptide chain release factor 3"/>
    <property type="match status" value="1"/>
</dbReference>
<dbReference type="FunFam" id="3.30.70.3280:FF:000001">
    <property type="entry name" value="Peptide chain release factor 3"/>
    <property type="match status" value="1"/>
</dbReference>
<dbReference type="FunFam" id="3.40.50.300:FF:000542">
    <property type="entry name" value="Peptide chain release factor 3"/>
    <property type="match status" value="1"/>
</dbReference>
<dbReference type="Gene3D" id="3.40.50.300">
    <property type="entry name" value="P-loop containing nucleotide triphosphate hydrolases"/>
    <property type="match status" value="2"/>
</dbReference>
<dbReference type="Gene3D" id="3.30.70.3280">
    <property type="entry name" value="Peptide chain release factor 3, domain III"/>
    <property type="match status" value="1"/>
</dbReference>
<dbReference type="HAMAP" id="MF_00072">
    <property type="entry name" value="Rel_fac_3"/>
    <property type="match status" value="1"/>
</dbReference>
<dbReference type="InterPro" id="IPR053905">
    <property type="entry name" value="EF-G-like_DII"/>
</dbReference>
<dbReference type="InterPro" id="IPR035647">
    <property type="entry name" value="EFG_III/V"/>
</dbReference>
<dbReference type="InterPro" id="IPR031157">
    <property type="entry name" value="G_TR_CS"/>
</dbReference>
<dbReference type="InterPro" id="IPR027417">
    <property type="entry name" value="P-loop_NTPase"/>
</dbReference>
<dbReference type="InterPro" id="IPR004548">
    <property type="entry name" value="PrfC"/>
</dbReference>
<dbReference type="InterPro" id="IPR032090">
    <property type="entry name" value="RF3_C"/>
</dbReference>
<dbReference type="InterPro" id="IPR038467">
    <property type="entry name" value="RF3_dom_3_sf"/>
</dbReference>
<dbReference type="InterPro" id="IPR041732">
    <property type="entry name" value="RF3_GTP-bd"/>
</dbReference>
<dbReference type="InterPro" id="IPR005225">
    <property type="entry name" value="Small_GTP-bd"/>
</dbReference>
<dbReference type="InterPro" id="IPR000795">
    <property type="entry name" value="T_Tr_GTP-bd_dom"/>
</dbReference>
<dbReference type="InterPro" id="IPR009000">
    <property type="entry name" value="Transl_B-barrel_sf"/>
</dbReference>
<dbReference type="NCBIfam" id="TIGR00503">
    <property type="entry name" value="prfC"/>
    <property type="match status" value="1"/>
</dbReference>
<dbReference type="NCBIfam" id="NF001964">
    <property type="entry name" value="PRK00741.1"/>
    <property type="match status" value="1"/>
</dbReference>
<dbReference type="NCBIfam" id="TIGR00231">
    <property type="entry name" value="small_GTP"/>
    <property type="match status" value="1"/>
</dbReference>
<dbReference type="PANTHER" id="PTHR43556">
    <property type="entry name" value="PEPTIDE CHAIN RELEASE FACTOR RF3"/>
    <property type="match status" value="1"/>
</dbReference>
<dbReference type="PANTHER" id="PTHR43556:SF2">
    <property type="entry name" value="PEPTIDE CHAIN RELEASE FACTOR RF3"/>
    <property type="match status" value="1"/>
</dbReference>
<dbReference type="Pfam" id="PF22042">
    <property type="entry name" value="EF-G_D2"/>
    <property type="match status" value="1"/>
</dbReference>
<dbReference type="Pfam" id="PF00009">
    <property type="entry name" value="GTP_EFTU"/>
    <property type="match status" value="1"/>
</dbReference>
<dbReference type="Pfam" id="PF16658">
    <property type="entry name" value="RF3_C"/>
    <property type="match status" value="1"/>
</dbReference>
<dbReference type="PRINTS" id="PR00315">
    <property type="entry name" value="ELONGATNFCT"/>
</dbReference>
<dbReference type="SUPFAM" id="SSF54980">
    <property type="entry name" value="EF-G C-terminal domain-like"/>
    <property type="match status" value="1"/>
</dbReference>
<dbReference type="SUPFAM" id="SSF52540">
    <property type="entry name" value="P-loop containing nucleoside triphosphate hydrolases"/>
    <property type="match status" value="1"/>
</dbReference>
<dbReference type="SUPFAM" id="SSF50447">
    <property type="entry name" value="Translation proteins"/>
    <property type="match status" value="1"/>
</dbReference>
<dbReference type="PROSITE" id="PS00301">
    <property type="entry name" value="G_TR_1"/>
    <property type="match status" value="1"/>
</dbReference>
<dbReference type="PROSITE" id="PS51722">
    <property type="entry name" value="G_TR_2"/>
    <property type="match status" value="1"/>
</dbReference>
<feature type="chain" id="PRO_0000210958" description="Peptide chain release factor 3">
    <location>
        <begin position="1"/>
        <end position="533"/>
    </location>
</feature>
<feature type="domain" description="tr-type G">
    <location>
        <begin position="11"/>
        <end position="284"/>
    </location>
</feature>
<feature type="binding site" evidence="1">
    <location>
        <begin position="20"/>
        <end position="27"/>
    </location>
    <ligand>
        <name>GTP</name>
        <dbReference type="ChEBI" id="CHEBI:37565"/>
    </ligand>
</feature>
<feature type="binding site" evidence="1">
    <location>
        <begin position="92"/>
        <end position="96"/>
    </location>
    <ligand>
        <name>GTP</name>
        <dbReference type="ChEBI" id="CHEBI:37565"/>
    </ligand>
</feature>
<feature type="binding site" evidence="1">
    <location>
        <begin position="146"/>
        <end position="149"/>
    </location>
    <ligand>
        <name>GTP</name>
        <dbReference type="ChEBI" id="CHEBI:37565"/>
    </ligand>
</feature>
<proteinExistence type="inferred from homology"/>
<reference key="1">
    <citation type="journal article" date="2002" name="Nature">
        <title>Genome sequence of the plant pathogen Ralstonia solanacearum.</title>
        <authorList>
            <person name="Salanoubat M."/>
            <person name="Genin S."/>
            <person name="Artiguenave F."/>
            <person name="Gouzy J."/>
            <person name="Mangenot S."/>
            <person name="Arlat M."/>
            <person name="Billault A."/>
            <person name="Brottier P."/>
            <person name="Camus J.-C."/>
            <person name="Cattolico L."/>
            <person name="Chandler M."/>
            <person name="Choisne N."/>
            <person name="Claudel-Renard C."/>
            <person name="Cunnac S."/>
            <person name="Demange N."/>
            <person name="Gaspin C."/>
            <person name="Lavie M."/>
            <person name="Moisan A."/>
            <person name="Robert C."/>
            <person name="Saurin W."/>
            <person name="Schiex T."/>
            <person name="Siguier P."/>
            <person name="Thebault P."/>
            <person name="Whalen M."/>
            <person name="Wincker P."/>
            <person name="Levy M."/>
            <person name="Weissenbach J."/>
            <person name="Boucher C.A."/>
        </authorList>
    </citation>
    <scope>NUCLEOTIDE SEQUENCE [LARGE SCALE GENOMIC DNA]</scope>
    <source>
        <strain>ATCC BAA-1114 / GMI1000</strain>
    </source>
</reference>
<gene>
    <name evidence="1" type="primary">prfC</name>
    <name type="ordered locus">RSp1662</name>
    <name type="ORF">RS02221</name>
</gene>
<sequence>MPVSTLQQEIRRRRTFAIISHPDAGKTTLTEKLLWFGGAIQMAGAVRARKASRHATSDWMELEKQRGISVTSSVMQFPYRNDGGDYIVNLLDTPGHEDFSEDTYRTLTAVDSAVMVIDSVNGVEAQTIKLLNVCRLRSTPILTFINKLDREGRAPIELLDEIENVLQIQCAPMTWPIGMGKSFRGVYHLVNDTVQLFDPKAETEKGATAGMIQGLDNPELDRVLGSQAEELRIDIELVRGASHTFDKDLFLAGKQCPVYFGSAVNNFGVQSLLDALVGLSPEPLARATQTREVAPLEDKFTGFVFKIQANMDPKHRDRIAFVRVCSGRFERGMKLLQVSTGKTVAINNAITFMAQDRNTTEEAYAGDIIGVPNHGTIRLGDAFTEGEPLRFTGIPSFAPEYFRRARLNNPLKTKQLQKGLQQLAEEGATQMFRPLASNDLVLGAVGTLQFDVVAHRLEYEYGVDAIFEPHECATARWLKGKPEDIDKLIDKAGHNVAVDGAGDYVYLAPSQVNLRLTQERFPDIQFMETREVV</sequence>
<protein>
    <recommendedName>
        <fullName evidence="1">Peptide chain release factor 3</fullName>
        <shortName evidence="1">RF-3</shortName>
    </recommendedName>
</protein>
<organism>
    <name type="scientific">Ralstonia nicotianae (strain ATCC BAA-1114 / GMI1000)</name>
    <name type="common">Ralstonia solanacearum</name>
    <dbReference type="NCBI Taxonomy" id="267608"/>
    <lineage>
        <taxon>Bacteria</taxon>
        <taxon>Pseudomonadati</taxon>
        <taxon>Pseudomonadota</taxon>
        <taxon>Betaproteobacteria</taxon>
        <taxon>Burkholderiales</taxon>
        <taxon>Burkholderiaceae</taxon>
        <taxon>Ralstonia</taxon>
        <taxon>Ralstonia solanacearum species complex</taxon>
    </lineage>
</organism>
<comment type="function">
    <text evidence="1">Increases the formation of ribosomal termination complexes and stimulates activities of RF-1 and RF-2. It binds guanine nucleotides and has strong preference for UGA stop codons. It may interact directly with the ribosome. The stimulation of RF-1 and RF-2 is significantly reduced by GTP and GDP, but not by GMP.</text>
</comment>
<comment type="subcellular location">
    <subcellularLocation>
        <location evidence="1">Cytoplasm</location>
    </subcellularLocation>
</comment>
<comment type="similarity">
    <text evidence="1">Belongs to the TRAFAC class translation factor GTPase superfamily. Classic translation factor GTPase family. PrfC subfamily.</text>
</comment>
<evidence type="ECO:0000255" key="1">
    <source>
        <dbReference type="HAMAP-Rule" id="MF_00072"/>
    </source>
</evidence>
<name>RF3_RALN1</name>
<keyword id="KW-0963">Cytoplasm</keyword>
<keyword id="KW-0342">GTP-binding</keyword>
<keyword id="KW-0547">Nucleotide-binding</keyword>
<keyword id="KW-0614">Plasmid</keyword>
<keyword id="KW-0648">Protein biosynthesis</keyword>
<keyword id="KW-1185">Reference proteome</keyword>
<accession>Q8XPH8</accession>
<geneLocation type="plasmid">
    <name>megaplasmid Rsp</name>
</geneLocation>